<sequence>MYQLQFINLVYDTTKLTHLEQTNINLFIGNWSNHQLQKSICIRHGDDTSHNQYHILFIDTAHQRIKFSSIDNEEIIYILDYDDTQHILMQTSSKQGIGTSRPIVYERLV</sequence>
<gene>
    <name type="primary">sspC</name>
    <name type="ordered locus">SAS0982</name>
</gene>
<accession>Q6GAG6</accession>
<evidence type="ECO:0000250" key="1"/>
<evidence type="ECO:0000305" key="2"/>
<name>SSPC_STAAS</name>
<reference key="1">
    <citation type="journal article" date="2004" name="Proc. Natl. Acad. Sci. U.S.A.">
        <title>Complete genomes of two clinical Staphylococcus aureus strains: evidence for the rapid evolution of virulence and drug resistance.</title>
        <authorList>
            <person name="Holden M.T.G."/>
            <person name="Feil E.J."/>
            <person name="Lindsay J.A."/>
            <person name="Peacock S.J."/>
            <person name="Day N.P.J."/>
            <person name="Enright M.C."/>
            <person name="Foster T.J."/>
            <person name="Moore C.E."/>
            <person name="Hurst L."/>
            <person name="Atkin R."/>
            <person name="Barron A."/>
            <person name="Bason N."/>
            <person name="Bentley S.D."/>
            <person name="Chillingworth C."/>
            <person name="Chillingworth T."/>
            <person name="Churcher C."/>
            <person name="Clark L."/>
            <person name="Corton C."/>
            <person name="Cronin A."/>
            <person name="Doggett J."/>
            <person name="Dowd L."/>
            <person name="Feltwell T."/>
            <person name="Hance Z."/>
            <person name="Harris B."/>
            <person name="Hauser H."/>
            <person name="Holroyd S."/>
            <person name="Jagels K."/>
            <person name="James K.D."/>
            <person name="Lennard N."/>
            <person name="Line A."/>
            <person name="Mayes R."/>
            <person name="Moule S."/>
            <person name="Mungall K."/>
            <person name="Ormond D."/>
            <person name="Quail M.A."/>
            <person name="Rabbinowitsch E."/>
            <person name="Rutherford K.M."/>
            <person name="Sanders M."/>
            <person name="Sharp S."/>
            <person name="Simmonds M."/>
            <person name="Stevens K."/>
            <person name="Whitehead S."/>
            <person name="Barrell B.G."/>
            <person name="Spratt B.G."/>
            <person name="Parkhill J."/>
        </authorList>
    </citation>
    <scope>NUCLEOTIDE SEQUENCE [LARGE SCALE GENOMIC DNA]</scope>
    <source>
        <strain>MSSA476</strain>
    </source>
</reference>
<dbReference type="EMBL" id="BX571857">
    <property type="protein sequence ID" value="CAG42757.1"/>
    <property type="molecule type" value="Genomic_DNA"/>
</dbReference>
<dbReference type="RefSeq" id="WP_000284457.1">
    <property type="nucleotide sequence ID" value="NC_002953.3"/>
</dbReference>
<dbReference type="SMR" id="Q6GAG6"/>
<dbReference type="MEROPS" id="I57.001"/>
<dbReference type="KEGG" id="sas:SAS0982"/>
<dbReference type="HOGENOM" id="CLU_174854_0_0_9"/>
<dbReference type="GO" id="GO:0005737">
    <property type="term" value="C:cytoplasm"/>
    <property type="evidence" value="ECO:0007669"/>
    <property type="project" value="UniProtKB-SubCell"/>
</dbReference>
<dbReference type="GO" id="GO:0004869">
    <property type="term" value="F:cysteine-type endopeptidase inhibitor activity"/>
    <property type="evidence" value="ECO:0007669"/>
    <property type="project" value="UniProtKB-KW"/>
</dbReference>
<dbReference type="Gene3D" id="2.40.310.10">
    <property type="entry name" value="beta-Barrel protease inhibitors"/>
    <property type="match status" value="1"/>
</dbReference>
<dbReference type="InterPro" id="IPR016085">
    <property type="entry name" value="Protease_inh_b-brl_dom"/>
</dbReference>
<dbReference type="InterPro" id="IPR037296">
    <property type="entry name" value="Staphostatin_A/B"/>
</dbReference>
<dbReference type="InterPro" id="IPR015113">
    <property type="entry name" value="Staphostatin_B"/>
</dbReference>
<dbReference type="Pfam" id="PF09023">
    <property type="entry name" value="Staphostatin_B"/>
    <property type="match status" value="1"/>
</dbReference>
<dbReference type="SUPFAM" id="SSF50882">
    <property type="entry name" value="beta-Barrel protease inhibitors"/>
    <property type="match status" value="1"/>
</dbReference>
<protein>
    <recommendedName>
        <fullName>Staphostatin B</fullName>
    </recommendedName>
    <alternativeName>
        <fullName>Staphylococcal cysteine protease B inhibitor</fullName>
    </alternativeName>
</protein>
<keyword id="KW-0963">Cytoplasm</keyword>
<keyword id="KW-0646">Protease inhibitor</keyword>
<keyword id="KW-0789">Thiol protease inhibitor</keyword>
<keyword id="KW-0843">Virulence</keyword>
<feature type="chain" id="PRO_0000220558" description="Staphostatin B">
    <location>
        <begin position="1"/>
        <end position="109"/>
    </location>
</feature>
<feature type="region of interest" description="Binds to staphopain B" evidence="1">
    <location>
        <begin position="97"/>
        <end position="101"/>
    </location>
</feature>
<comment type="function">
    <text evidence="1">Specifically inhibits the cysteine protease staphopain B (SspB) by blocking the active site of the enzyme. Probably required to protect cytoplasmic proteins from being degraded by prematurely activated/folded prostaphopain B. Also involved in growth capacity, viability and bacterial morphology (By similarity).</text>
</comment>
<comment type="subunit">
    <text evidence="1">Forms a stable non-covalent complex with prematurely activated/folded SspB.</text>
</comment>
<comment type="subcellular location">
    <subcellularLocation>
        <location evidence="1">Cytoplasm</location>
    </subcellularLocation>
</comment>
<comment type="miscellaneous">
    <text evidence="1">Inactivated by staphylococcal serine protease (SspA).</text>
</comment>
<comment type="similarity">
    <text evidence="2">Belongs to the protease inhibitor I57 (SspC) family.</text>
</comment>
<proteinExistence type="inferred from homology"/>
<organism>
    <name type="scientific">Staphylococcus aureus (strain MSSA476)</name>
    <dbReference type="NCBI Taxonomy" id="282459"/>
    <lineage>
        <taxon>Bacteria</taxon>
        <taxon>Bacillati</taxon>
        <taxon>Bacillota</taxon>
        <taxon>Bacilli</taxon>
        <taxon>Bacillales</taxon>
        <taxon>Staphylococcaceae</taxon>
        <taxon>Staphylococcus</taxon>
    </lineage>
</organism>